<reference key="1">
    <citation type="journal article" date="2007" name="Curr. Biol.">
        <title>Reduced genome of the thioautotrophic intracellular symbiont in a deep-sea clam, Calyptogena okutanii.</title>
        <authorList>
            <person name="Kuwahara H."/>
            <person name="Yoshida T."/>
            <person name="Takaki Y."/>
            <person name="Shimamura S."/>
            <person name="Nishi S."/>
            <person name="Harada M."/>
            <person name="Matsuyama K."/>
            <person name="Takishita K."/>
            <person name="Kawato M."/>
            <person name="Uematsu K."/>
            <person name="Fujiwara Y."/>
            <person name="Sato T."/>
            <person name="Kato C."/>
            <person name="Kitagawa M."/>
            <person name="Kato I."/>
            <person name="Maruyama T."/>
        </authorList>
    </citation>
    <scope>NUCLEOTIDE SEQUENCE [LARGE SCALE GENOMIC DNA]</scope>
    <source>
        <strain>HA</strain>
    </source>
</reference>
<sequence length="403" mass="45448">MDKTSINKVVLAYSGGLDTSIIVKWLQDTYQCEVVTFTADIGQGEEVEPARVKAEAAGVKEIYIEDLREEFARNFVFPMFRANAIYEGEYLLGTSIARPLISKRLVEIAKQVGADAISHGATGKGNDQVRFELNAYALNADIQVIAPWREWDLSSRESLMDYAQKHGIEIDYKKQSKKSPYSMDANLLHISYEGNILEDPWTEPEEDMWRWTLSPENAPDKVEYVEMTFKKGDIIAINGKVMSPASVMEDLNKRAGAHGIGRDDIVENRFVGMKSRGCYETPSGTVMLKARRAMESLTLDRAAAHLKDELMPKYAEMVYNGFWFAPEREMLQAAIDKTQETVSGVVRLKFYKGNVTVVGRQSKNSLFSEKIVTFENDDGIYNQRDAAGFIKLNALRLCLNTIK</sequence>
<accession>A5CXM9</accession>
<protein>
    <recommendedName>
        <fullName evidence="1">Argininosuccinate synthase</fullName>
        <ecNumber evidence="1">6.3.4.5</ecNumber>
    </recommendedName>
    <alternativeName>
        <fullName evidence="1">Citrulline--aspartate ligase</fullName>
    </alternativeName>
</protein>
<evidence type="ECO:0000255" key="1">
    <source>
        <dbReference type="HAMAP-Rule" id="MF_00005"/>
    </source>
</evidence>
<dbReference type="EC" id="6.3.4.5" evidence="1"/>
<dbReference type="EMBL" id="AP009247">
    <property type="protein sequence ID" value="BAF61288.1"/>
    <property type="molecule type" value="Genomic_DNA"/>
</dbReference>
<dbReference type="RefSeq" id="WP_011929558.1">
    <property type="nucleotide sequence ID" value="NC_009465.1"/>
</dbReference>
<dbReference type="SMR" id="A5CXM9"/>
<dbReference type="STRING" id="412965.COSY_0154"/>
<dbReference type="KEGG" id="vok:COSY_0154"/>
<dbReference type="eggNOG" id="COG0137">
    <property type="taxonomic scope" value="Bacteria"/>
</dbReference>
<dbReference type="HOGENOM" id="CLU_032784_4_2_6"/>
<dbReference type="UniPathway" id="UPA00068">
    <property type="reaction ID" value="UER00113"/>
</dbReference>
<dbReference type="Proteomes" id="UP000000247">
    <property type="component" value="Chromosome"/>
</dbReference>
<dbReference type="GO" id="GO:0005737">
    <property type="term" value="C:cytoplasm"/>
    <property type="evidence" value="ECO:0007669"/>
    <property type="project" value="UniProtKB-SubCell"/>
</dbReference>
<dbReference type="GO" id="GO:0004055">
    <property type="term" value="F:argininosuccinate synthase activity"/>
    <property type="evidence" value="ECO:0007669"/>
    <property type="project" value="UniProtKB-UniRule"/>
</dbReference>
<dbReference type="GO" id="GO:0005524">
    <property type="term" value="F:ATP binding"/>
    <property type="evidence" value="ECO:0007669"/>
    <property type="project" value="UniProtKB-UniRule"/>
</dbReference>
<dbReference type="GO" id="GO:0000053">
    <property type="term" value="P:argininosuccinate metabolic process"/>
    <property type="evidence" value="ECO:0007669"/>
    <property type="project" value="TreeGrafter"/>
</dbReference>
<dbReference type="GO" id="GO:0006526">
    <property type="term" value="P:L-arginine biosynthetic process"/>
    <property type="evidence" value="ECO:0007669"/>
    <property type="project" value="UniProtKB-UniRule"/>
</dbReference>
<dbReference type="GO" id="GO:0000050">
    <property type="term" value="P:urea cycle"/>
    <property type="evidence" value="ECO:0007669"/>
    <property type="project" value="TreeGrafter"/>
</dbReference>
<dbReference type="CDD" id="cd01999">
    <property type="entry name" value="ASS"/>
    <property type="match status" value="1"/>
</dbReference>
<dbReference type="FunFam" id="3.40.50.620:FF:000019">
    <property type="entry name" value="Argininosuccinate synthase"/>
    <property type="match status" value="1"/>
</dbReference>
<dbReference type="FunFam" id="3.90.1260.10:FF:000007">
    <property type="entry name" value="Argininosuccinate synthase"/>
    <property type="match status" value="1"/>
</dbReference>
<dbReference type="Gene3D" id="3.90.1260.10">
    <property type="entry name" value="Argininosuccinate synthetase, chain A, domain 2"/>
    <property type="match status" value="1"/>
</dbReference>
<dbReference type="Gene3D" id="3.40.50.620">
    <property type="entry name" value="HUPs"/>
    <property type="match status" value="1"/>
</dbReference>
<dbReference type="Gene3D" id="1.20.5.470">
    <property type="entry name" value="Single helix bin"/>
    <property type="match status" value="1"/>
</dbReference>
<dbReference type="HAMAP" id="MF_00005">
    <property type="entry name" value="Arg_succ_synth_type1"/>
    <property type="match status" value="1"/>
</dbReference>
<dbReference type="InterPro" id="IPR048268">
    <property type="entry name" value="Arginosuc_syn_C"/>
</dbReference>
<dbReference type="InterPro" id="IPR048267">
    <property type="entry name" value="Arginosuc_syn_N"/>
</dbReference>
<dbReference type="InterPro" id="IPR001518">
    <property type="entry name" value="Arginosuc_synth"/>
</dbReference>
<dbReference type="InterPro" id="IPR018223">
    <property type="entry name" value="Arginosuc_synth_CS"/>
</dbReference>
<dbReference type="InterPro" id="IPR023434">
    <property type="entry name" value="Arginosuc_synth_type_1_subfam"/>
</dbReference>
<dbReference type="InterPro" id="IPR024074">
    <property type="entry name" value="AS_cat/multimer_dom_body"/>
</dbReference>
<dbReference type="InterPro" id="IPR014729">
    <property type="entry name" value="Rossmann-like_a/b/a_fold"/>
</dbReference>
<dbReference type="NCBIfam" id="TIGR00032">
    <property type="entry name" value="argG"/>
    <property type="match status" value="1"/>
</dbReference>
<dbReference type="NCBIfam" id="NF001770">
    <property type="entry name" value="PRK00509.1"/>
    <property type="match status" value="1"/>
</dbReference>
<dbReference type="PANTHER" id="PTHR11587">
    <property type="entry name" value="ARGININOSUCCINATE SYNTHASE"/>
    <property type="match status" value="1"/>
</dbReference>
<dbReference type="PANTHER" id="PTHR11587:SF2">
    <property type="entry name" value="ARGININOSUCCINATE SYNTHASE"/>
    <property type="match status" value="1"/>
</dbReference>
<dbReference type="Pfam" id="PF20979">
    <property type="entry name" value="Arginosuc_syn_C"/>
    <property type="match status" value="1"/>
</dbReference>
<dbReference type="Pfam" id="PF00764">
    <property type="entry name" value="Arginosuc_synth"/>
    <property type="match status" value="1"/>
</dbReference>
<dbReference type="SUPFAM" id="SSF52402">
    <property type="entry name" value="Adenine nucleotide alpha hydrolases-like"/>
    <property type="match status" value="1"/>
</dbReference>
<dbReference type="SUPFAM" id="SSF69864">
    <property type="entry name" value="Argininosuccinate synthetase, C-terminal domain"/>
    <property type="match status" value="1"/>
</dbReference>
<dbReference type="PROSITE" id="PS00564">
    <property type="entry name" value="ARGININOSUCCIN_SYN_1"/>
    <property type="match status" value="1"/>
</dbReference>
<dbReference type="PROSITE" id="PS00565">
    <property type="entry name" value="ARGININOSUCCIN_SYN_2"/>
    <property type="match status" value="1"/>
</dbReference>
<proteinExistence type="inferred from homology"/>
<keyword id="KW-0028">Amino-acid biosynthesis</keyword>
<keyword id="KW-0055">Arginine biosynthesis</keyword>
<keyword id="KW-0067">ATP-binding</keyword>
<keyword id="KW-0963">Cytoplasm</keyword>
<keyword id="KW-0436">Ligase</keyword>
<keyword id="KW-0547">Nucleotide-binding</keyword>
<keyword id="KW-1185">Reference proteome</keyword>
<organism>
    <name type="scientific">Vesicomyosocius okutanii subsp. Calyptogena okutanii (strain HA)</name>
    <dbReference type="NCBI Taxonomy" id="412965"/>
    <lineage>
        <taxon>Bacteria</taxon>
        <taxon>Pseudomonadati</taxon>
        <taxon>Pseudomonadota</taxon>
        <taxon>Gammaproteobacteria</taxon>
        <taxon>Candidatus Pseudothioglobaceae</taxon>
        <taxon>Candidatus Vesicomyosocius</taxon>
    </lineage>
</organism>
<name>ASSY_VESOH</name>
<gene>
    <name evidence="1" type="primary">argG</name>
    <name type="ordered locus">COSY_0154</name>
</gene>
<comment type="catalytic activity">
    <reaction evidence="1">
        <text>L-citrulline + L-aspartate + ATP = 2-(N(omega)-L-arginino)succinate + AMP + diphosphate + H(+)</text>
        <dbReference type="Rhea" id="RHEA:10932"/>
        <dbReference type="ChEBI" id="CHEBI:15378"/>
        <dbReference type="ChEBI" id="CHEBI:29991"/>
        <dbReference type="ChEBI" id="CHEBI:30616"/>
        <dbReference type="ChEBI" id="CHEBI:33019"/>
        <dbReference type="ChEBI" id="CHEBI:57472"/>
        <dbReference type="ChEBI" id="CHEBI:57743"/>
        <dbReference type="ChEBI" id="CHEBI:456215"/>
        <dbReference type="EC" id="6.3.4.5"/>
    </reaction>
</comment>
<comment type="pathway">
    <text evidence="1">Amino-acid biosynthesis; L-arginine biosynthesis; L-arginine from L-ornithine and carbamoyl phosphate: step 2/3.</text>
</comment>
<comment type="subunit">
    <text evidence="1">Homotetramer.</text>
</comment>
<comment type="subcellular location">
    <subcellularLocation>
        <location evidence="1">Cytoplasm</location>
    </subcellularLocation>
</comment>
<comment type="similarity">
    <text evidence="1">Belongs to the argininosuccinate synthase family. Type 1 subfamily.</text>
</comment>
<feature type="chain" id="PRO_1000057045" description="Argininosuccinate synthase">
    <location>
        <begin position="1"/>
        <end position="403"/>
    </location>
</feature>
<feature type="binding site" evidence="1">
    <location>
        <begin position="12"/>
        <end position="20"/>
    </location>
    <ligand>
        <name>ATP</name>
        <dbReference type="ChEBI" id="CHEBI:30616"/>
    </ligand>
</feature>
<feature type="binding site" evidence="1">
    <location>
        <position position="39"/>
    </location>
    <ligand>
        <name>ATP</name>
        <dbReference type="ChEBI" id="CHEBI:30616"/>
    </ligand>
</feature>
<feature type="binding site" evidence="1">
    <location>
        <position position="90"/>
    </location>
    <ligand>
        <name>L-citrulline</name>
        <dbReference type="ChEBI" id="CHEBI:57743"/>
    </ligand>
</feature>
<feature type="binding site" evidence="1">
    <location>
        <position position="95"/>
    </location>
    <ligand>
        <name>L-citrulline</name>
        <dbReference type="ChEBI" id="CHEBI:57743"/>
    </ligand>
</feature>
<feature type="binding site" evidence="1">
    <location>
        <position position="120"/>
    </location>
    <ligand>
        <name>ATP</name>
        <dbReference type="ChEBI" id="CHEBI:30616"/>
    </ligand>
</feature>
<feature type="binding site" evidence="1">
    <location>
        <position position="122"/>
    </location>
    <ligand>
        <name>L-aspartate</name>
        <dbReference type="ChEBI" id="CHEBI:29991"/>
    </ligand>
</feature>
<feature type="binding site" evidence="1">
    <location>
        <position position="126"/>
    </location>
    <ligand>
        <name>L-aspartate</name>
        <dbReference type="ChEBI" id="CHEBI:29991"/>
    </ligand>
</feature>
<feature type="binding site" evidence="1">
    <location>
        <position position="126"/>
    </location>
    <ligand>
        <name>L-citrulline</name>
        <dbReference type="ChEBI" id="CHEBI:57743"/>
    </ligand>
</feature>
<feature type="binding site" evidence="1">
    <location>
        <position position="127"/>
    </location>
    <ligand>
        <name>L-aspartate</name>
        <dbReference type="ChEBI" id="CHEBI:29991"/>
    </ligand>
</feature>
<feature type="binding site" evidence="1">
    <location>
        <position position="130"/>
    </location>
    <ligand>
        <name>L-citrulline</name>
        <dbReference type="ChEBI" id="CHEBI:57743"/>
    </ligand>
</feature>
<feature type="binding site" evidence="1">
    <location>
        <position position="182"/>
    </location>
    <ligand>
        <name>L-citrulline</name>
        <dbReference type="ChEBI" id="CHEBI:57743"/>
    </ligand>
</feature>
<feature type="binding site" evidence="1">
    <location>
        <position position="191"/>
    </location>
    <ligand>
        <name>L-citrulline</name>
        <dbReference type="ChEBI" id="CHEBI:57743"/>
    </ligand>
</feature>
<feature type="binding site" evidence="1">
    <location>
        <position position="267"/>
    </location>
    <ligand>
        <name>L-citrulline</name>
        <dbReference type="ChEBI" id="CHEBI:57743"/>
    </ligand>
</feature>
<feature type="binding site" evidence="1">
    <location>
        <position position="279"/>
    </location>
    <ligand>
        <name>L-citrulline</name>
        <dbReference type="ChEBI" id="CHEBI:57743"/>
    </ligand>
</feature>